<proteinExistence type="inferred from homology"/>
<keyword id="KW-0997">Cell inner membrane</keyword>
<keyword id="KW-1003">Cell membrane</keyword>
<keyword id="KW-0472">Membrane</keyword>
<keyword id="KW-1185">Reference proteome</keyword>
<keyword id="KW-0762">Sugar transport</keyword>
<keyword id="KW-0769">Symport</keyword>
<keyword id="KW-0812">Transmembrane</keyword>
<keyword id="KW-1133">Transmembrane helix</keyword>
<keyword id="KW-0813">Transport</keyword>
<reference key="1">
    <citation type="submission" date="2007-08" db="EMBL/GenBank/DDBJ databases">
        <authorList>
            <consortium name="The Citrobacter koseri Genome Sequencing Project"/>
            <person name="McClelland M."/>
            <person name="Sanderson E.K."/>
            <person name="Porwollik S."/>
            <person name="Spieth J."/>
            <person name="Clifton W.S."/>
            <person name="Latreille P."/>
            <person name="Courtney L."/>
            <person name="Wang C."/>
            <person name="Pepin K."/>
            <person name="Bhonagiri V."/>
            <person name="Nash W."/>
            <person name="Johnson M."/>
            <person name="Thiruvilangam P."/>
            <person name="Wilson R."/>
        </authorList>
    </citation>
    <scope>NUCLEOTIDE SEQUENCE [LARGE SCALE GENOMIC DNA]</scope>
    <source>
        <strain>ATCC BAA-895 / CDC 4225-83 / SGSC4696</strain>
    </source>
</reference>
<gene>
    <name evidence="1" type="primary">rhaT</name>
    <name type="ordered locus">CKO_03094</name>
</gene>
<evidence type="ECO:0000255" key="1">
    <source>
        <dbReference type="HAMAP-Rule" id="MF_01532"/>
    </source>
</evidence>
<sequence>MSNAITMGIFWHLIGAASAACFYAPFKQVKQWSWETMWSIGGIVSWLILPWTISALLLPDFWAYYSSFNLSTLLPVFLFGAMWGIGNINYGLTMRYLGMSMGIGIAIGITLIVGTLMTPIINGNFDVLINTEGGRMTLLGVLVALIGVGIVTRAGQLKERKMGITAEEFNLKKGLLLAVMCGIFSAGMSFAMNAAKPMHEAAAALGVDPLYVALPSYVVIMGGGALINLGFCFVRLAKVKNLSIKADFSLAKSMIITNILLSALGGLMWYLQFFFYAWGHARIPPQYDYISWMLHMSFYVLCGGIVGLVLKEWKNAGRRPVSVLSLGCVVIIIAANIVGMGMAS</sequence>
<accession>A8AL22</accession>
<organism>
    <name type="scientific">Citrobacter koseri (strain ATCC BAA-895 / CDC 4225-83 / SGSC4696)</name>
    <dbReference type="NCBI Taxonomy" id="290338"/>
    <lineage>
        <taxon>Bacteria</taxon>
        <taxon>Pseudomonadati</taxon>
        <taxon>Pseudomonadota</taxon>
        <taxon>Gammaproteobacteria</taxon>
        <taxon>Enterobacterales</taxon>
        <taxon>Enterobacteriaceae</taxon>
        <taxon>Citrobacter</taxon>
    </lineage>
</organism>
<protein>
    <recommendedName>
        <fullName evidence="1">L-rhamnose-proton symporter</fullName>
    </recommendedName>
    <alternativeName>
        <fullName evidence="1">L-rhamnose-H(+) transport protein</fullName>
    </alternativeName>
</protein>
<comment type="function">
    <text evidence="1">Uptake of L-rhamnose across the cytoplasmic membrane with the concomitant transport of protons into the cell (symport system).</text>
</comment>
<comment type="catalytic activity">
    <reaction evidence="1">
        <text>L-rhamnopyranose(in) + H(+)(in) = L-rhamnopyranose(out) + H(+)(out)</text>
        <dbReference type="Rhea" id="RHEA:29947"/>
        <dbReference type="ChEBI" id="CHEBI:15378"/>
        <dbReference type="ChEBI" id="CHEBI:62346"/>
    </reaction>
    <physiologicalReaction direction="right-to-left" evidence="1">
        <dbReference type="Rhea" id="RHEA:29949"/>
    </physiologicalReaction>
</comment>
<comment type="subcellular location">
    <subcellularLocation>
        <location evidence="1">Cell inner membrane</location>
        <topology evidence="1">Multi-pass membrane protein</topology>
    </subcellularLocation>
</comment>
<comment type="similarity">
    <text evidence="1">Belongs to the L-rhamnose transporter (TC 2.A.7.6) family.</text>
</comment>
<name>RHAT_CITK8</name>
<feature type="chain" id="PRO_1000068689" description="L-rhamnose-proton symporter">
    <location>
        <begin position="1"/>
        <end position="344"/>
    </location>
</feature>
<feature type="transmembrane region" description="Helical" evidence="1">
    <location>
        <begin position="4"/>
        <end position="24"/>
    </location>
</feature>
<feature type="transmembrane region" description="Helical" evidence="1">
    <location>
        <begin position="38"/>
        <end position="58"/>
    </location>
</feature>
<feature type="transmembrane region" description="Helical" evidence="1">
    <location>
        <begin position="68"/>
        <end position="88"/>
    </location>
</feature>
<feature type="transmembrane region" description="Helical" evidence="1">
    <location>
        <begin position="101"/>
        <end position="121"/>
    </location>
</feature>
<feature type="transmembrane region" description="Helical" evidence="1">
    <location>
        <begin position="137"/>
        <end position="157"/>
    </location>
</feature>
<feature type="transmembrane region" description="Helical" evidence="1">
    <location>
        <begin position="175"/>
        <end position="195"/>
    </location>
</feature>
<feature type="transmembrane region" description="Helical" evidence="1">
    <location>
        <begin position="214"/>
        <end position="234"/>
    </location>
</feature>
<feature type="transmembrane region" description="Helical" evidence="1">
    <location>
        <begin position="259"/>
        <end position="279"/>
    </location>
</feature>
<feature type="transmembrane region" description="Helical" evidence="1">
    <location>
        <begin position="290"/>
        <end position="310"/>
    </location>
</feature>
<feature type="transmembrane region" description="Helical" evidence="1">
    <location>
        <begin position="323"/>
        <end position="343"/>
    </location>
</feature>
<dbReference type="EMBL" id="CP000822">
    <property type="protein sequence ID" value="ABV14185.1"/>
    <property type="molecule type" value="Genomic_DNA"/>
</dbReference>
<dbReference type="RefSeq" id="WP_012133892.1">
    <property type="nucleotide sequence ID" value="NC_009792.1"/>
</dbReference>
<dbReference type="STRING" id="290338.CKO_03094"/>
<dbReference type="GeneID" id="45136894"/>
<dbReference type="KEGG" id="cko:CKO_03094"/>
<dbReference type="HOGENOM" id="CLU_066437_0_0_6"/>
<dbReference type="OrthoDB" id="9790043at2"/>
<dbReference type="Proteomes" id="UP000008148">
    <property type="component" value="Chromosome"/>
</dbReference>
<dbReference type="GO" id="GO:0005886">
    <property type="term" value="C:plasma membrane"/>
    <property type="evidence" value="ECO:0007669"/>
    <property type="project" value="UniProtKB-SubCell"/>
</dbReference>
<dbReference type="GO" id="GO:0015153">
    <property type="term" value="F:rhamnose transmembrane transporter activity"/>
    <property type="evidence" value="ECO:0007669"/>
    <property type="project" value="UniProtKB-UniRule"/>
</dbReference>
<dbReference type="GO" id="GO:0015293">
    <property type="term" value="F:symporter activity"/>
    <property type="evidence" value="ECO:0007669"/>
    <property type="project" value="UniProtKB-KW"/>
</dbReference>
<dbReference type="HAMAP" id="MF_01532">
    <property type="entry name" value="RhaT"/>
    <property type="match status" value="1"/>
</dbReference>
<dbReference type="InterPro" id="IPR004673">
    <property type="entry name" value="L-rhamnose-proton_sym_RhaT"/>
</dbReference>
<dbReference type="NCBIfam" id="NF010021">
    <property type="entry name" value="PRK13499.1-1"/>
    <property type="match status" value="1"/>
</dbReference>
<dbReference type="NCBIfam" id="NF010023">
    <property type="entry name" value="PRK13499.1-3"/>
    <property type="match status" value="1"/>
</dbReference>
<dbReference type="NCBIfam" id="TIGR00776">
    <property type="entry name" value="RhaT"/>
    <property type="match status" value="1"/>
</dbReference>
<dbReference type="Pfam" id="PF06379">
    <property type="entry name" value="RhaT"/>
    <property type="match status" value="1"/>
</dbReference>